<proteinExistence type="inferred from homology"/>
<name>WHIA_MOOTA</name>
<dbReference type="EMBL" id="CP000232">
    <property type="protein sequence ID" value="ABC18595.1"/>
    <property type="molecule type" value="Genomic_DNA"/>
</dbReference>
<dbReference type="RefSeq" id="YP_429138.1">
    <property type="nucleotide sequence ID" value="NC_007644.1"/>
</dbReference>
<dbReference type="SMR" id="Q2RLU4"/>
<dbReference type="STRING" id="264732.Moth_0260"/>
<dbReference type="EnsemblBacteria" id="ABC18595">
    <property type="protein sequence ID" value="ABC18595"/>
    <property type="gene ID" value="Moth_0260"/>
</dbReference>
<dbReference type="KEGG" id="mta:Moth_0260"/>
<dbReference type="PATRIC" id="fig|264732.11.peg.276"/>
<dbReference type="eggNOG" id="COG1481">
    <property type="taxonomic scope" value="Bacteria"/>
</dbReference>
<dbReference type="HOGENOM" id="CLU_053282_0_0_9"/>
<dbReference type="OrthoDB" id="401278at2"/>
<dbReference type="GO" id="GO:0003677">
    <property type="term" value="F:DNA binding"/>
    <property type="evidence" value="ECO:0007669"/>
    <property type="project" value="UniProtKB-UniRule"/>
</dbReference>
<dbReference type="GO" id="GO:0051301">
    <property type="term" value="P:cell division"/>
    <property type="evidence" value="ECO:0007669"/>
    <property type="project" value="UniProtKB-UniRule"/>
</dbReference>
<dbReference type="GO" id="GO:0043937">
    <property type="term" value="P:regulation of sporulation"/>
    <property type="evidence" value="ECO:0007669"/>
    <property type="project" value="InterPro"/>
</dbReference>
<dbReference type="Gene3D" id="3.10.28.10">
    <property type="entry name" value="Homing endonucleases"/>
    <property type="match status" value="1"/>
</dbReference>
<dbReference type="HAMAP" id="MF_01420">
    <property type="entry name" value="HTH_type_WhiA"/>
    <property type="match status" value="1"/>
</dbReference>
<dbReference type="InterPro" id="IPR027434">
    <property type="entry name" value="Homing_endonucl"/>
</dbReference>
<dbReference type="InterPro" id="IPR018478">
    <property type="entry name" value="Sporu_reg_WhiA_N_dom"/>
</dbReference>
<dbReference type="InterPro" id="IPR003802">
    <property type="entry name" value="Sporulation_regulator_WhiA"/>
</dbReference>
<dbReference type="InterPro" id="IPR023054">
    <property type="entry name" value="Sporulation_regulator_WhiA_C"/>
</dbReference>
<dbReference type="InterPro" id="IPR039518">
    <property type="entry name" value="WhiA_LAGLIDADG_dom"/>
</dbReference>
<dbReference type="NCBIfam" id="TIGR00647">
    <property type="entry name" value="DNA_bind_WhiA"/>
    <property type="match status" value="1"/>
</dbReference>
<dbReference type="PANTHER" id="PTHR37307">
    <property type="entry name" value="CELL DIVISION PROTEIN WHIA-RELATED"/>
    <property type="match status" value="1"/>
</dbReference>
<dbReference type="PANTHER" id="PTHR37307:SF1">
    <property type="entry name" value="CELL DIVISION PROTEIN WHIA-RELATED"/>
    <property type="match status" value="1"/>
</dbReference>
<dbReference type="Pfam" id="PF02650">
    <property type="entry name" value="HTH_WhiA"/>
    <property type="match status" value="1"/>
</dbReference>
<dbReference type="Pfam" id="PF14527">
    <property type="entry name" value="LAGLIDADG_WhiA"/>
    <property type="match status" value="1"/>
</dbReference>
<dbReference type="Pfam" id="PF10298">
    <property type="entry name" value="WhiA_N"/>
    <property type="match status" value="1"/>
</dbReference>
<dbReference type="SUPFAM" id="SSF55608">
    <property type="entry name" value="Homing endonucleases"/>
    <property type="match status" value="1"/>
</dbReference>
<evidence type="ECO:0000255" key="1">
    <source>
        <dbReference type="HAMAP-Rule" id="MF_01420"/>
    </source>
</evidence>
<reference key="1">
    <citation type="journal article" date="2008" name="Environ. Microbiol.">
        <title>The complete genome sequence of Moorella thermoacetica (f. Clostridium thermoaceticum).</title>
        <authorList>
            <person name="Pierce E."/>
            <person name="Xie G."/>
            <person name="Barabote R.D."/>
            <person name="Saunders E."/>
            <person name="Han C.S."/>
            <person name="Detter J.C."/>
            <person name="Richardson P."/>
            <person name="Brettin T.S."/>
            <person name="Das A."/>
            <person name="Ljungdahl L.G."/>
            <person name="Ragsdale S.W."/>
        </authorList>
    </citation>
    <scope>NUCLEOTIDE SEQUENCE [LARGE SCALE GENOMIC DNA]</scope>
    <source>
        <strain>ATCC 39073 / JCM 9320</strain>
    </source>
</reference>
<sequence>MLMPLSFSLQTKEELARVKARHPCCRQAELVAFLRLGNLDGGQPGEETVLFTTPYPALARKVYSLAREFLACPVKVRNSRRQGKGRPVFRVVARARLKEIQDWLAGRAGVPEYPCCQAAYMRGAFLVTGSVNKPSGTHHLELIFPDAAMAGQMQGLMQQQELEPRLSRRQRGYVLYLKDSEQIIRALSLMGAYSAVLAYENVLIFKDMRNRVNRLVNCETANLTKTVETGLRQAENIRYLIATVGWDYLPPALREIAAVRLQHPEASLKELGEMLHPPVGKSGVNHRLRRLELIARQVRGQGREGYAPDDDLSRPRA</sequence>
<gene>
    <name evidence="1" type="primary">whiA</name>
    <name type="ordered locus">Moth_0260</name>
</gene>
<accession>Q2RLU4</accession>
<organism>
    <name type="scientific">Moorella thermoacetica (strain ATCC 39073 / JCM 9320)</name>
    <dbReference type="NCBI Taxonomy" id="264732"/>
    <lineage>
        <taxon>Bacteria</taxon>
        <taxon>Bacillati</taxon>
        <taxon>Bacillota</taxon>
        <taxon>Clostridia</taxon>
        <taxon>Moorellales</taxon>
        <taxon>Moorellaceae</taxon>
        <taxon>Moorella</taxon>
    </lineage>
</organism>
<protein>
    <recommendedName>
        <fullName evidence="1">Probable cell division protein WhiA</fullName>
    </recommendedName>
</protein>
<keyword id="KW-0131">Cell cycle</keyword>
<keyword id="KW-0132">Cell division</keyword>
<keyword id="KW-0238">DNA-binding</keyword>
<comment type="function">
    <text evidence="1">Involved in cell division and chromosome segregation.</text>
</comment>
<comment type="similarity">
    <text evidence="1">Belongs to the WhiA family.</text>
</comment>
<feature type="chain" id="PRO_0000376520" description="Probable cell division protein WhiA">
    <location>
        <begin position="1"/>
        <end position="317"/>
    </location>
</feature>
<feature type="DNA-binding region" description="H-T-H motif" evidence="1">
    <location>
        <begin position="267"/>
        <end position="300"/>
    </location>
</feature>